<name>RIR2H_MYCA1</name>
<proteinExistence type="inferred from homology"/>
<keyword id="KW-0408">Iron</keyword>
<keyword id="KW-0464">Manganese</keyword>
<keyword id="KW-0479">Metal-binding</keyword>
<keyword id="KW-0560">Oxidoreductase</keyword>
<protein>
    <recommendedName>
        <fullName evidence="1">R2-like ligand binding oxidase</fullName>
        <ecNumber evidence="1">1.-.-.-</ecNumber>
    </recommendedName>
    <alternativeName>
        <fullName>Ribonucleotide reductase R2 subunit homolog</fullName>
    </alternativeName>
    <alternativeName>
        <fullName>Ribonucleotide reductase small subunit homolog</fullName>
    </alternativeName>
</protein>
<evidence type="ECO:0000250" key="1">
    <source>
        <dbReference type="UniProtKB" id="P9WH69"/>
    </source>
</evidence>
<evidence type="ECO:0000305" key="2"/>
<dbReference type="EC" id="1.-.-.-" evidence="1"/>
<dbReference type="EMBL" id="CP000479">
    <property type="protein sequence ID" value="ABK68081.1"/>
    <property type="molecule type" value="Genomic_DNA"/>
</dbReference>
<dbReference type="RefSeq" id="WP_009979645.1">
    <property type="nucleotide sequence ID" value="NC_008595.1"/>
</dbReference>
<dbReference type="SMR" id="A0QMC0"/>
<dbReference type="KEGG" id="mav:MAV_4937"/>
<dbReference type="HOGENOM" id="CLU_072736_0_0_11"/>
<dbReference type="Proteomes" id="UP000001574">
    <property type="component" value="Chromosome"/>
</dbReference>
<dbReference type="GO" id="GO:0046872">
    <property type="term" value="F:metal ion binding"/>
    <property type="evidence" value="ECO:0007669"/>
    <property type="project" value="UniProtKB-KW"/>
</dbReference>
<dbReference type="GO" id="GO:0016491">
    <property type="term" value="F:oxidoreductase activity"/>
    <property type="evidence" value="ECO:0007669"/>
    <property type="project" value="UniProtKB-KW"/>
</dbReference>
<dbReference type="GO" id="GO:0009263">
    <property type="term" value="P:deoxyribonucleotide biosynthetic process"/>
    <property type="evidence" value="ECO:0007669"/>
    <property type="project" value="InterPro"/>
</dbReference>
<dbReference type="CDD" id="cd07911">
    <property type="entry name" value="RNRR2_Rv0233_like"/>
    <property type="match status" value="1"/>
</dbReference>
<dbReference type="Gene3D" id="1.10.620.20">
    <property type="entry name" value="Ribonucleotide Reductase, subunit A"/>
    <property type="match status" value="1"/>
</dbReference>
<dbReference type="InterPro" id="IPR009078">
    <property type="entry name" value="Ferritin-like_SF"/>
</dbReference>
<dbReference type="InterPro" id="IPR033908">
    <property type="entry name" value="R2LOX"/>
</dbReference>
<dbReference type="InterPro" id="IPR012348">
    <property type="entry name" value="RNR-like"/>
</dbReference>
<dbReference type="InterPro" id="IPR000358">
    <property type="entry name" value="RNR_small_fam"/>
</dbReference>
<dbReference type="NCBIfam" id="NF006199">
    <property type="entry name" value="PRK08326.1-2"/>
    <property type="match status" value="1"/>
</dbReference>
<dbReference type="NCBIfam" id="NF006200">
    <property type="entry name" value="PRK08326.1-3"/>
    <property type="match status" value="1"/>
</dbReference>
<dbReference type="NCBIfam" id="NF006201">
    <property type="entry name" value="PRK08326.1-4"/>
    <property type="match status" value="1"/>
</dbReference>
<dbReference type="Pfam" id="PF00268">
    <property type="entry name" value="Ribonuc_red_sm"/>
    <property type="match status" value="1"/>
</dbReference>
<dbReference type="SUPFAM" id="SSF47240">
    <property type="entry name" value="Ferritin-like"/>
    <property type="match status" value="1"/>
</dbReference>
<reference key="1">
    <citation type="submission" date="2006-10" db="EMBL/GenBank/DDBJ databases">
        <authorList>
            <person name="Fleischmann R.D."/>
            <person name="Dodson R.J."/>
            <person name="Haft D.H."/>
            <person name="Merkel J.S."/>
            <person name="Nelson W.C."/>
            <person name="Fraser C.M."/>
        </authorList>
    </citation>
    <scope>NUCLEOTIDE SEQUENCE [LARGE SCALE GENOMIC DNA]</scope>
    <source>
        <strain>104</strain>
    </source>
</reference>
<gene>
    <name type="ordered locus">MAV_4937</name>
</gene>
<comment type="function">
    <text evidence="1">Probable oxidase that might be involved in lipid metabolism.</text>
</comment>
<comment type="cofactor">
    <cofactor evidence="1">
        <name>Fe cation</name>
        <dbReference type="ChEBI" id="CHEBI:24875"/>
    </cofactor>
    <text evidence="1">Binds 1 Fe cation per subunit.</text>
</comment>
<comment type="cofactor">
    <cofactor evidence="1">
        <name>Mn(2+)</name>
        <dbReference type="ChEBI" id="CHEBI:29035"/>
    </cofactor>
    <text evidence="1">Binds 1 manganese ion per subunit. The iron and manganese ions form a dinuclear manganese-iron cluster.</text>
</comment>
<comment type="subunit">
    <text evidence="1">Homodimer.</text>
</comment>
<comment type="similarity">
    <text evidence="2">Belongs to the ribonucleoside diphosphate reductase small chain family. R2-like ligand binding oxidase subfamily.</text>
</comment>
<accession>A0QMC0</accession>
<organism>
    <name type="scientific">Mycobacterium avium (strain 104)</name>
    <dbReference type="NCBI Taxonomy" id="243243"/>
    <lineage>
        <taxon>Bacteria</taxon>
        <taxon>Bacillati</taxon>
        <taxon>Actinomycetota</taxon>
        <taxon>Actinomycetes</taxon>
        <taxon>Mycobacteriales</taxon>
        <taxon>Mycobacteriaceae</taxon>
        <taxon>Mycobacterium</taxon>
        <taxon>Mycobacterium avium complex (MAC)</taxon>
    </lineage>
</organism>
<feature type="chain" id="PRO_0000375423" description="R2-like ligand binding oxidase">
    <location>
        <begin position="1"/>
        <end position="311"/>
    </location>
</feature>
<feature type="binding site" evidence="1">
    <location>
        <position position="68"/>
    </location>
    <ligand>
        <name>Mn(2+)</name>
        <dbReference type="ChEBI" id="CHEBI:29035"/>
    </ligand>
</feature>
<feature type="binding site" evidence="1">
    <location>
        <position position="101"/>
    </location>
    <ligand>
        <name>Fe cation</name>
        <dbReference type="ChEBI" id="CHEBI:24875"/>
    </ligand>
</feature>
<feature type="binding site" evidence="1">
    <location>
        <position position="101"/>
    </location>
    <ligand>
        <name>Mn(2+)</name>
        <dbReference type="ChEBI" id="CHEBI:29035"/>
    </ligand>
</feature>
<feature type="binding site" evidence="1">
    <location>
        <position position="104"/>
    </location>
    <ligand>
        <name>Mn(2+)</name>
        <dbReference type="ChEBI" id="CHEBI:29035"/>
    </ligand>
</feature>
<feature type="binding site" evidence="1">
    <location>
        <position position="167"/>
    </location>
    <ligand>
        <name>Fe cation</name>
        <dbReference type="ChEBI" id="CHEBI:24875"/>
    </ligand>
</feature>
<feature type="binding site" evidence="1">
    <location>
        <position position="202"/>
    </location>
    <ligand>
        <name>Fe cation</name>
        <dbReference type="ChEBI" id="CHEBI:24875"/>
    </ligand>
</feature>
<feature type="binding site" evidence="1">
    <location>
        <position position="205"/>
    </location>
    <ligand>
        <name>Fe cation</name>
        <dbReference type="ChEBI" id="CHEBI:24875"/>
    </ligand>
</feature>
<feature type="cross-link" description="3-(O4'-tyrosyl)-valine (Val-Tyr)" evidence="1">
    <location>
        <begin position="71"/>
        <end position="162"/>
    </location>
</feature>
<sequence length="311" mass="35365">MNRTRSASMVQGGLNWDSLPLKLFAGGNAKFWNPADIDFSRDRADWERLTDDERSYATRLCAEFIAGEESVTQDIQPFMAAMRAEGRLGDEMYLTQFAFEEAKHVQVFRMWLDAVGVTDDLHHFLDDVPSYRTIFYEELPDCLNALTIDPSPAAQVRASVTYNHMVEGMLALTGYFGWHKICVERGILPGMQELVRRIGDDERRHMAWGTFTCRRHVAADDANWGVFETRMNELMPLGLRLIEEGFALYDPMPFDLSVDEFMAYASDKGMRRFGTIASARGRPLAEIDLDYTPVQLEDTFADEDARALAAV</sequence>